<feature type="chain" id="PRO_0000121451" description="Transcription elongation factor A protein 2">
    <location>
        <begin position="1"/>
        <end position="299"/>
    </location>
</feature>
<feature type="domain" description="TFIIS N-terminal" evidence="5">
    <location>
        <begin position="5"/>
        <end position="82"/>
    </location>
</feature>
<feature type="domain" description="TFIIS central" evidence="6">
    <location>
        <begin position="138"/>
        <end position="254"/>
    </location>
</feature>
<feature type="zinc finger region" description="TFIIS-type" evidence="4">
    <location>
        <begin position="257"/>
        <end position="297"/>
    </location>
</feature>
<feature type="region of interest" description="Disordered" evidence="7">
    <location>
        <begin position="83"/>
        <end position="126"/>
    </location>
</feature>
<feature type="compositionally biased region" description="Polar residues" evidence="7">
    <location>
        <begin position="95"/>
        <end position="109"/>
    </location>
</feature>
<feature type="binding site" evidence="4">
    <location>
        <position position="261"/>
    </location>
    <ligand>
        <name>Zn(2+)</name>
        <dbReference type="ChEBI" id="CHEBI:29105"/>
    </ligand>
</feature>
<feature type="binding site" evidence="4">
    <location>
        <position position="264"/>
    </location>
    <ligand>
        <name>Zn(2+)</name>
        <dbReference type="ChEBI" id="CHEBI:29105"/>
    </ligand>
</feature>
<feature type="binding site" evidence="4">
    <location>
        <position position="289"/>
    </location>
    <ligand>
        <name>Zn(2+)</name>
        <dbReference type="ChEBI" id="CHEBI:29105"/>
    </ligand>
</feature>
<feature type="binding site" evidence="4">
    <location>
        <position position="292"/>
    </location>
    <ligand>
        <name>Zn(2+)</name>
        <dbReference type="ChEBI" id="CHEBI:29105"/>
    </ligand>
</feature>
<feature type="modified residue" description="Phosphoserine" evidence="2">
    <location>
        <position position="59"/>
    </location>
</feature>
<feature type="modified residue" description="Phosphoserine" evidence="2">
    <location>
        <position position="100"/>
    </location>
</feature>
<feature type="cross-link" description="Glycyl lysine isopeptide (Lys-Gly) (interchain with G-Cter in ubiquitin)" evidence="3">
    <location>
        <position position="57"/>
    </location>
</feature>
<comment type="function">
    <text evidence="8">Necessary for efficient RNA polymerase II transcription elongation past template-encoded arresting sites. The arresting sites in DNA have the property of trapping a certain fraction of elongating RNA polymerases that pass through, resulting in locked ternary complexes. Cleavage of the nascent transcript by S-II allows the resumption of elongation from the new 3'-terminus.</text>
</comment>
<comment type="subunit">
    <text evidence="1">Interacts with the basal transcription factor GTF2B. Interacts with REXO1 (By similarity).</text>
</comment>
<comment type="subcellular location">
    <subcellularLocation>
        <location>Nucleus</location>
    </subcellularLocation>
</comment>
<comment type="tissue specificity">
    <text evidence="8">Testis specific.</text>
</comment>
<comment type="similarity">
    <text evidence="9">Belongs to the TFS-II family.</text>
</comment>
<reference key="1">
    <citation type="journal article" date="1994" name="J. Biol. Chem.">
        <title>Cloning and identification of testis-specific transcription elongation factor S-II.</title>
        <authorList>
            <person name="Xu Q."/>
            <person name="Nakanishi T."/>
            <person name="Sekimizu K."/>
            <person name="Natori S."/>
        </authorList>
    </citation>
    <scope>NUCLEOTIDE SEQUENCE [MRNA]</scope>
    <scope>FUNCTION</scope>
    <scope>TISSUE SPECIFICITY</scope>
    <source>
        <tissue>Testis</tissue>
    </source>
</reference>
<keyword id="KW-0238">DNA-binding</keyword>
<keyword id="KW-1017">Isopeptide bond</keyword>
<keyword id="KW-0479">Metal-binding</keyword>
<keyword id="KW-0539">Nucleus</keyword>
<keyword id="KW-0597">Phosphoprotein</keyword>
<keyword id="KW-1185">Reference proteome</keyword>
<keyword id="KW-0804">Transcription</keyword>
<keyword id="KW-0805">Transcription regulation</keyword>
<keyword id="KW-0832">Ubl conjugation</keyword>
<keyword id="KW-0862">Zinc</keyword>
<keyword id="KW-0863">Zinc-finger</keyword>
<sequence length="299" mass="33528">MGKEEEIARIARRLDKMVTRKNAEGAMDLLRELKNMPITLHLLQSTRVGMSVNALRKQSSDEELIALAKSLIKSWKKLLDVSDGKSRDQGRGTPLPTSSSKDASGTTDLSCKKPDPPRTSSTPRITTFPQVPITCDAVRNKCREMLTLALQTDHDHVAVGVSCEHLSSQIEECIFLDVGNTDMKYKNRVRSRISNLKDAKNPGLRRNVLCGAITPQQIAVMTSEEMASDELKEIRKAMTKEAIREHQMARTGGTQTDLFTCNKCRKKNCTYTQVQTRSSDEPMTTYVVCNECGNRWKFC</sequence>
<protein>
    <recommendedName>
        <fullName>Transcription elongation factor A protein 2</fullName>
    </recommendedName>
    <alternativeName>
        <fullName>Protein S-II-T1</fullName>
    </alternativeName>
    <alternativeName>
        <fullName>Testis-specific S-II</fullName>
    </alternativeName>
    <alternativeName>
        <fullName>Transcription elongation factor S-II protein 2</fullName>
    </alternativeName>
    <alternativeName>
        <fullName>Transcription elongation factor TFIIS.l</fullName>
    </alternativeName>
</protein>
<accession>Q63799</accession>
<evidence type="ECO:0000250" key="1"/>
<evidence type="ECO:0000250" key="2">
    <source>
        <dbReference type="UniProtKB" id="P23193"/>
    </source>
</evidence>
<evidence type="ECO:0000250" key="3">
    <source>
        <dbReference type="UniProtKB" id="Q15560"/>
    </source>
</evidence>
<evidence type="ECO:0000255" key="4">
    <source>
        <dbReference type="PROSITE-ProRule" id="PRU00472"/>
    </source>
</evidence>
<evidence type="ECO:0000255" key="5">
    <source>
        <dbReference type="PROSITE-ProRule" id="PRU00649"/>
    </source>
</evidence>
<evidence type="ECO:0000255" key="6">
    <source>
        <dbReference type="PROSITE-ProRule" id="PRU00651"/>
    </source>
</evidence>
<evidence type="ECO:0000256" key="7">
    <source>
        <dbReference type="SAM" id="MobiDB-lite"/>
    </source>
</evidence>
<evidence type="ECO:0000269" key="8">
    <source>
    </source>
</evidence>
<evidence type="ECO:0000305" key="9"/>
<proteinExistence type="evidence at transcript level"/>
<name>TCEA2_RAT</name>
<dbReference type="EMBL" id="D12927">
    <property type="protein sequence ID" value="BAA02310.1"/>
    <property type="molecule type" value="mRNA"/>
</dbReference>
<dbReference type="PIR" id="A53004">
    <property type="entry name" value="A53004"/>
</dbReference>
<dbReference type="RefSeq" id="NP_476439.1">
    <property type="nucleotide sequence ID" value="NM_057098.2"/>
</dbReference>
<dbReference type="SMR" id="Q63799"/>
<dbReference type="FunCoup" id="Q63799">
    <property type="interactions" value="2954"/>
</dbReference>
<dbReference type="STRING" id="10116.ENSRNOP00000022073"/>
<dbReference type="PhosphoSitePlus" id="Q63799"/>
<dbReference type="PaxDb" id="10116-ENSRNOP00000022073"/>
<dbReference type="GeneID" id="29575"/>
<dbReference type="KEGG" id="rno:29575"/>
<dbReference type="UCSC" id="RGD:61825">
    <property type="organism name" value="rat"/>
</dbReference>
<dbReference type="AGR" id="RGD:61825"/>
<dbReference type="CTD" id="6919"/>
<dbReference type="RGD" id="61825">
    <property type="gene designation" value="Tcea2"/>
</dbReference>
<dbReference type="VEuPathDB" id="HostDB:ENSRNOG00000016288"/>
<dbReference type="eggNOG" id="KOG1105">
    <property type="taxonomic scope" value="Eukaryota"/>
</dbReference>
<dbReference type="HOGENOM" id="CLU_037637_2_0_1"/>
<dbReference type="InParanoid" id="Q63799"/>
<dbReference type="PhylomeDB" id="Q63799"/>
<dbReference type="PRO" id="PR:Q63799"/>
<dbReference type="Proteomes" id="UP000002494">
    <property type="component" value="Chromosome 3"/>
</dbReference>
<dbReference type="Bgee" id="ENSRNOG00000016288">
    <property type="expression patterns" value="Expressed in testis and 20 other cell types or tissues"/>
</dbReference>
<dbReference type="GO" id="GO:0005634">
    <property type="term" value="C:nucleus"/>
    <property type="evidence" value="ECO:0000318"/>
    <property type="project" value="GO_Central"/>
</dbReference>
<dbReference type="GO" id="GO:0003677">
    <property type="term" value="F:DNA binding"/>
    <property type="evidence" value="ECO:0007669"/>
    <property type="project" value="UniProtKB-KW"/>
</dbReference>
<dbReference type="GO" id="GO:0008270">
    <property type="term" value="F:zinc ion binding"/>
    <property type="evidence" value="ECO:0007669"/>
    <property type="project" value="UniProtKB-KW"/>
</dbReference>
<dbReference type="GO" id="GO:0045944">
    <property type="term" value="P:positive regulation of transcription by RNA polymerase II"/>
    <property type="evidence" value="ECO:0000314"/>
    <property type="project" value="RGD"/>
</dbReference>
<dbReference type="GO" id="GO:0006357">
    <property type="term" value="P:regulation of transcription by RNA polymerase II"/>
    <property type="evidence" value="ECO:0000318"/>
    <property type="project" value="GO_Central"/>
</dbReference>
<dbReference type="GO" id="GO:0006368">
    <property type="term" value="P:transcription elongation by RNA polymerase II"/>
    <property type="evidence" value="ECO:0007669"/>
    <property type="project" value="InterPro"/>
</dbReference>
<dbReference type="CDD" id="cd00183">
    <property type="entry name" value="TFIIS_I"/>
    <property type="match status" value="1"/>
</dbReference>
<dbReference type="CDD" id="cd13749">
    <property type="entry name" value="Zn-ribbon_TFIIS"/>
    <property type="match status" value="1"/>
</dbReference>
<dbReference type="FunFam" id="2.20.25.10:FF:000001">
    <property type="entry name" value="Probable Transcription elongation factor S-II"/>
    <property type="match status" value="1"/>
</dbReference>
<dbReference type="FunFam" id="1.20.930.10:FF:000002">
    <property type="entry name" value="Transcription elongation factor A (SII), 1"/>
    <property type="match status" value="1"/>
</dbReference>
<dbReference type="Gene3D" id="2.20.25.10">
    <property type="match status" value="1"/>
</dbReference>
<dbReference type="Gene3D" id="1.20.930.10">
    <property type="entry name" value="Conserved domain common to transcription factors TFIIS, elongin A, CRSP70"/>
    <property type="match status" value="1"/>
</dbReference>
<dbReference type="Gene3D" id="1.10.472.30">
    <property type="entry name" value="Transcription elongation factor S-II, central domain"/>
    <property type="match status" value="1"/>
</dbReference>
<dbReference type="InterPro" id="IPR035100">
    <property type="entry name" value="TF_IIS-typ"/>
</dbReference>
<dbReference type="InterPro" id="IPR003617">
    <property type="entry name" value="TFIIS/CRSP70_N_sub"/>
</dbReference>
<dbReference type="InterPro" id="IPR035441">
    <property type="entry name" value="TFIIS/LEDGF_dom_sf"/>
</dbReference>
<dbReference type="InterPro" id="IPR003618">
    <property type="entry name" value="TFIIS_cen_dom"/>
</dbReference>
<dbReference type="InterPro" id="IPR036575">
    <property type="entry name" value="TFIIS_cen_dom_sf"/>
</dbReference>
<dbReference type="InterPro" id="IPR017923">
    <property type="entry name" value="TFIIS_N"/>
</dbReference>
<dbReference type="InterPro" id="IPR006289">
    <property type="entry name" value="TFSII"/>
</dbReference>
<dbReference type="InterPro" id="IPR001222">
    <property type="entry name" value="Znf_TFIIS"/>
</dbReference>
<dbReference type="NCBIfam" id="TIGR01385">
    <property type="entry name" value="TFSII"/>
    <property type="match status" value="1"/>
</dbReference>
<dbReference type="PANTHER" id="PTHR11477:SF3">
    <property type="entry name" value="TRANSCRIPTION ELONGATION FACTOR A PROTEIN 2"/>
    <property type="match status" value="1"/>
</dbReference>
<dbReference type="PANTHER" id="PTHR11477">
    <property type="entry name" value="TRANSCRIPTION FACTOR S-II ZINC FINGER DOMAIN-CONTAINING PROTEIN"/>
    <property type="match status" value="1"/>
</dbReference>
<dbReference type="Pfam" id="PF08711">
    <property type="entry name" value="Med26"/>
    <property type="match status" value="1"/>
</dbReference>
<dbReference type="Pfam" id="PF07500">
    <property type="entry name" value="TFIIS_M"/>
    <property type="match status" value="1"/>
</dbReference>
<dbReference type="Pfam" id="PF01096">
    <property type="entry name" value="Zn_ribbon_TFIIS"/>
    <property type="match status" value="1"/>
</dbReference>
<dbReference type="PIRSF" id="PIRSF006704">
    <property type="entry name" value="TF_IIS"/>
    <property type="match status" value="1"/>
</dbReference>
<dbReference type="SMART" id="SM00510">
    <property type="entry name" value="TFS2M"/>
    <property type="match status" value="1"/>
</dbReference>
<dbReference type="SMART" id="SM00509">
    <property type="entry name" value="TFS2N"/>
    <property type="match status" value="1"/>
</dbReference>
<dbReference type="SMART" id="SM00440">
    <property type="entry name" value="ZnF_C2C2"/>
    <property type="match status" value="1"/>
</dbReference>
<dbReference type="SUPFAM" id="SSF47676">
    <property type="entry name" value="Conserved domain common to transcription factors TFIIS, elongin A, CRSP70"/>
    <property type="match status" value="1"/>
</dbReference>
<dbReference type="SUPFAM" id="SSF46942">
    <property type="entry name" value="Elongation factor TFIIS domain 2"/>
    <property type="match status" value="1"/>
</dbReference>
<dbReference type="SUPFAM" id="SSF57783">
    <property type="entry name" value="Zinc beta-ribbon"/>
    <property type="match status" value="1"/>
</dbReference>
<dbReference type="PROSITE" id="PS51321">
    <property type="entry name" value="TFIIS_CENTRAL"/>
    <property type="match status" value="1"/>
</dbReference>
<dbReference type="PROSITE" id="PS51319">
    <property type="entry name" value="TFIIS_N"/>
    <property type="match status" value="1"/>
</dbReference>
<dbReference type="PROSITE" id="PS00466">
    <property type="entry name" value="ZF_TFIIS_1"/>
    <property type="match status" value="1"/>
</dbReference>
<dbReference type="PROSITE" id="PS51133">
    <property type="entry name" value="ZF_TFIIS_2"/>
    <property type="match status" value="1"/>
</dbReference>
<gene>
    <name type="primary">Tcea2</name>
    <name type="synonym">Siit1</name>
</gene>
<organism>
    <name type="scientific">Rattus norvegicus</name>
    <name type="common">Rat</name>
    <dbReference type="NCBI Taxonomy" id="10116"/>
    <lineage>
        <taxon>Eukaryota</taxon>
        <taxon>Metazoa</taxon>
        <taxon>Chordata</taxon>
        <taxon>Craniata</taxon>
        <taxon>Vertebrata</taxon>
        <taxon>Euteleostomi</taxon>
        <taxon>Mammalia</taxon>
        <taxon>Eutheria</taxon>
        <taxon>Euarchontoglires</taxon>
        <taxon>Glires</taxon>
        <taxon>Rodentia</taxon>
        <taxon>Myomorpha</taxon>
        <taxon>Muroidea</taxon>
        <taxon>Muridae</taxon>
        <taxon>Murinae</taxon>
        <taxon>Rattus</taxon>
    </lineage>
</organism>